<evidence type="ECO:0000255" key="1">
    <source>
        <dbReference type="HAMAP-Rule" id="MF_01371"/>
    </source>
</evidence>
<evidence type="ECO:0000305" key="2"/>
<proteinExistence type="inferred from homology"/>
<reference key="1">
    <citation type="journal article" date="2010" name="Appl. Environ. Microbiol.">
        <title>Conserved symbiotic plasmid DNA sequences in the multireplicon pangenomic structure of Rhizobium etli.</title>
        <authorList>
            <person name="Gonzalez V."/>
            <person name="Acosta J.L."/>
            <person name="Santamaria R.I."/>
            <person name="Bustos P."/>
            <person name="Fernandez J.L."/>
            <person name="Hernandez Gonzalez I.L."/>
            <person name="Diaz R."/>
            <person name="Flores M."/>
            <person name="Palacios R."/>
            <person name="Mora J."/>
            <person name="Davila G."/>
        </authorList>
    </citation>
    <scope>NUCLEOTIDE SEQUENCE [LARGE SCALE GENOMIC DNA]</scope>
    <source>
        <strain>CIAT 652</strain>
    </source>
</reference>
<name>RL30_RHIE6</name>
<sequence length="69" mass="7830">MAKATKKAEAKTVTIEQIGSPIRRPDVQQRTLIGLGLNKMHRRRTLEDTPSVRGMIRAVQHLVRVVDEK</sequence>
<dbReference type="EMBL" id="CP001074">
    <property type="protein sequence ID" value="ACE90737.1"/>
    <property type="molecule type" value="Genomic_DNA"/>
</dbReference>
<dbReference type="SMR" id="B3PWT9"/>
<dbReference type="KEGG" id="rec:RHECIAT_CH0001767"/>
<dbReference type="eggNOG" id="COG1841">
    <property type="taxonomic scope" value="Bacteria"/>
</dbReference>
<dbReference type="HOGENOM" id="CLU_131047_1_2_5"/>
<dbReference type="Proteomes" id="UP000008817">
    <property type="component" value="Chromosome"/>
</dbReference>
<dbReference type="GO" id="GO:0022625">
    <property type="term" value="C:cytosolic large ribosomal subunit"/>
    <property type="evidence" value="ECO:0007669"/>
    <property type="project" value="TreeGrafter"/>
</dbReference>
<dbReference type="GO" id="GO:0003735">
    <property type="term" value="F:structural constituent of ribosome"/>
    <property type="evidence" value="ECO:0007669"/>
    <property type="project" value="InterPro"/>
</dbReference>
<dbReference type="GO" id="GO:0006412">
    <property type="term" value="P:translation"/>
    <property type="evidence" value="ECO:0007669"/>
    <property type="project" value="UniProtKB-UniRule"/>
</dbReference>
<dbReference type="CDD" id="cd01658">
    <property type="entry name" value="Ribosomal_L30"/>
    <property type="match status" value="1"/>
</dbReference>
<dbReference type="Gene3D" id="3.30.1390.20">
    <property type="entry name" value="Ribosomal protein L30, ferredoxin-like fold domain"/>
    <property type="match status" value="1"/>
</dbReference>
<dbReference type="HAMAP" id="MF_01371_B">
    <property type="entry name" value="Ribosomal_uL30_B"/>
    <property type="match status" value="1"/>
</dbReference>
<dbReference type="InterPro" id="IPR036919">
    <property type="entry name" value="Ribo_uL30_ferredoxin-like_sf"/>
</dbReference>
<dbReference type="InterPro" id="IPR005996">
    <property type="entry name" value="Ribosomal_uL30_bac-type"/>
</dbReference>
<dbReference type="InterPro" id="IPR016082">
    <property type="entry name" value="Ribosomal_uL30_ferredoxin-like"/>
</dbReference>
<dbReference type="NCBIfam" id="TIGR01308">
    <property type="entry name" value="rpmD_bact"/>
    <property type="match status" value="1"/>
</dbReference>
<dbReference type="PANTHER" id="PTHR15892:SF2">
    <property type="entry name" value="LARGE RIBOSOMAL SUBUNIT PROTEIN UL30M"/>
    <property type="match status" value="1"/>
</dbReference>
<dbReference type="PANTHER" id="PTHR15892">
    <property type="entry name" value="MITOCHONDRIAL RIBOSOMAL PROTEIN L30"/>
    <property type="match status" value="1"/>
</dbReference>
<dbReference type="Pfam" id="PF00327">
    <property type="entry name" value="Ribosomal_L30"/>
    <property type="match status" value="1"/>
</dbReference>
<dbReference type="PIRSF" id="PIRSF002211">
    <property type="entry name" value="Ribosomal_L30_bac-type"/>
    <property type="match status" value="1"/>
</dbReference>
<dbReference type="SUPFAM" id="SSF55129">
    <property type="entry name" value="Ribosomal protein L30p/L7e"/>
    <property type="match status" value="1"/>
</dbReference>
<gene>
    <name evidence="1" type="primary">rpmD</name>
    <name type="ordered locus">RHECIAT_CH0001767</name>
</gene>
<organism>
    <name type="scientific">Rhizobium etli (strain CIAT 652)</name>
    <dbReference type="NCBI Taxonomy" id="491916"/>
    <lineage>
        <taxon>Bacteria</taxon>
        <taxon>Pseudomonadati</taxon>
        <taxon>Pseudomonadota</taxon>
        <taxon>Alphaproteobacteria</taxon>
        <taxon>Hyphomicrobiales</taxon>
        <taxon>Rhizobiaceae</taxon>
        <taxon>Rhizobium/Agrobacterium group</taxon>
        <taxon>Rhizobium</taxon>
    </lineage>
</organism>
<comment type="subunit">
    <text evidence="1">Part of the 50S ribosomal subunit.</text>
</comment>
<comment type="similarity">
    <text evidence="1">Belongs to the universal ribosomal protein uL30 family.</text>
</comment>
<protein>
    <recommendedName>
        <fullName evidence="1">Large ribosomal subunit protein uL30</fullName>
    </recommendedName>
    <alternativeName>
        <fullName evidence="2">50S ribosomal protein L30</fullName>
    </alternativeName>
</protein>
<feature type="chain" id="PRO_1000144707" description="Large ribosomal subunit protein uL30">
    <location>
        <begin position="1"/>
        <end position="69"/>
    </location>
</feature>
<keyword id="KW-0687">Ribonucleoprotein</keyword>
<keyword id="KW-0689">Ribosomal protein</keyword>
<accession>B3PWT9</accession>